<reference key="1">
    <citation type="journal article" date="2004" name="Nature">
        <title>Genome sequence of the Brown Norway rat yields insights into mammalian evolution.</title>
        <authorList>
            <person name="Gibbs R.A."/>
            <person name="Weinstock G.M."/>
            <person name="Metzker M.L."/>
            <person name="Muzny D.M."/>
            <person name="Sodergren E.J."/>
            <person name="Scherer S."/>
            <person name="Scott G."/>
            <person name="Steffen D."/>
            <person name="Worley K.C."/>
            <person name="Burch P.E."/>
            <person name="Okwuonu G."/>
            <person name="Hines S."/>
            <person name="Lewis L."/>
            <person name="Deramo C."/>
            <person name="Delgado O."/>
            <person name="Dugan-Rocha S."/>
            <person name="Miner G."/>
            <person name="Morgan M."/>
            <person name="Hawes A."/>
            <person name="Gill R."/>
            <person name="Holt R.A."/>
            <person name="Adams M.D."/>
            <person name="Amanatides P.G."/>
            <person name="Baden-Tillson H."/>
            <person name="Barnstead M."/>
            <person name="Chin S."/>
            <person name="Evans C.A."/>
            <person name="Ferriera S."/>
            <person name="Fosler C."/>
            <person name="Glodek A."/>
            <person name="Gu Z."/>
            <person name="Jennings D."/>
            <person name="Kraft C.L."/>
            <person name="Nguyen T."/>
            <person name="Pfannkoch C.M."/>
            <person name="Sitter C."/>
            <person name="Sutton G.G."/>
            <person name="Venter J.C."/>
            <person name="Woodage T."/>
            <person name="Smith D."/>
            <person name="Lee H.-M."/>
            <person name="Gustafson E."/>
            <person name="Cahill P."/>
            <person name="Kana A."/>
            <person name="Doucette-Stamm L."/>
            <person name="Weinstock K."/>
            <person name="Fechtel K."/>
            <person name="Weiss R.B."/>
            <person name="Dunn D.M."/>
            <person name="Green E.D."/>
            <person name="Blakesley R.W."/>
            <person name="Bouffard G.G."/>
            <person name="De Jong P.J."/>
            <person name="Osoegawa K."/>
            <person name="Zhu B."/>
            <person name="Marra M."/>
            <person name="Schein J."/>
            <person name="Bosdet I."/>
            <person name="Fjell C."/>
            <person name="Jones S."/>
            <person name="Krzywinski M."/>
            <person name="Mathewson C."/>
            <person name="Siddiqui A."/>
            <person name="Wye N."/>
            <person name="McPherson J."/>
            <person name="Zhao S."/>
            <person name="Fraser C.M."/>
            <person name="Shetty J."/>
            <person name="Shatsman S."/>
            <person name="Geer K."/>
            <person name="Chen Y."/>
            <person name="Abramzon S."/>
            <person name="Nierman W.C."/>
            <person name="Havlak P.H."/>
            <person name="Chen R."/>
            <person name="Durbin K.J."/>
            <person name="Egan A."/>
            <person name="Ren Y."/>
            <person name="Song X.-Z."/>
            <person name="Li B."/>
            <person name="Liu Y."/>
            <person name="Qin X."/>
            <person name="Cawley S."/>
            <person name="Cooney A.J."/>
            <person name="D'Souza L.M."/>
            <person name="Martin K."/>
            <person name="Wu J.Q."/>
            <person name="Gonzalez-Garay M.L."/>
            <person name="Jackson A.R."/>
            <person name="Kalafus K.J."/>
            <person name="McLeod M.P."/>
            <person name="Milosavljevic A."/>
            <person name="Virk D."/>
            <person name="Volkov A."/>
            <person name="Wheeler D.A."/>
            <person name="Zhang Z."/>
            <person name="Bailey J.A."/>
            <person name="Eichler E.E."/>
            <person name="Tuzun E."/>
            <person name="Birney E."/>
            <person name="Mongin E."/>
            <person name="Ureta-Vidal A."/>
            <person name="Woodwark C."/>
            <person name="Zdobnov E."/>
            <person name="Bork P."/>
            <person name="Suyama M."/>
            <person name="Torrents D."/>
            <person name="Alexandersson M."/>
            <person name="Trask B.J."/>
            <person name="Young J.M."/>
            <person name="Huang H."/>
            <person name="Wang H."/>
            <person name="Xing H."/>
            <person name="Daniels S."/>
            <person name="Gietzen D."/>
            <person name="Schmidt J."/>
            <person name="Stevens K."/>
            <person name="Vitt U."/>
            <person name="Wingrove J."/>
            <person name="Camara F."/>
            <person name="Mar Alba M."/>
            <person name="Abril J.F."/>
            <person name="Guigo R."/>
            <person name="Smit A."/>
            <person name="Dubchak I."/>
            <person name="Rubin E.M."/>
            <person name="Couronne O."/>
            <person name="Poliakov A."/>
            <person name="Huebner N."/>
            <person name="Ganten D."/>
            <person name="Goesele C."/>
            <person name="Hummel O."/>
            <person name="Kreitler T."/>
            <person name="Lee Y.-A."/>
            <person name="Monti J."/>
            <person name="Schulz H."/>
            <person name="Zimdahl H."/>
            <person name="Himmelbauer H."/>
            <person name="Lehrach H."/>
            <person name="Jacob H.J."/>
            <person name="Bromberg S."/>
            <person name="Gullings-Handley J."/>
            <person name="Jensen-Seaman M.I."/>
            <person name="Kwitek A.E."/>
            <person name="Lazar J."/>
            <person name="Pasko D."/>
            <person name="Tonellato P.J."/>
            <person name="Twigger S."/>
            <person name="Ponting C.P."/>
            <person name="Duarte J.M."/>
            <person name="Rice S."/>
            <person name="Goodstadt L."/>
            <person name="Beatson S.A."/>
            <person name="Emes R.D."/>
            <person name="Winter E.E."/>
            <person name="Webber C."/>
            <person name="Brandt P."/>
            <person name="Nyakatura G."/>
            <person name="Adetobi M."/>
            <person name="Chiaromonte F."/>
            <person name="Elnitski L."/>
            <person name="Eswara P."/>
            <person name="Hardison R.C."/>
            <person name="Hou M."/>
            <person name="Kolbe D."/>
            <person name="Makova K."/>
            <person name="Miller W."/>
            <person name="Nekrutenko A."/>
            <person name="Riemer C."/>
            <person name="Schwartz S."/>
            <person name="Taylor J."/>
            <person name="Yang S."/>
            <person name="Zhang Y."/>
            <person name="Lindpaintner K."/>
            <person name="Andrews T.D."/>
            <person name="Caccamo M."/>
            <person name="Clamp M."/>
            <person name="Clarke L."/>
            <person name="Curwen V."/>
            <person name="Durbin R.M."/>
            <person name="Eyras E."/>
            <person name="Searle S.M."/>
            <person name="Cooper G.M."/>
            <person name="Batzoglou S."/>
            <person name="Brudno M."/>
            <person name="Sidow A."/>
            <person name="Stone E.A."/>
            <person name="Payseur B.A."/>
            <person name="Bourque G."/>
            <person name="Lopez-Otin C."/>
            <person name="Puente X.S."/>
            <person name="Chakrabarti K."/>
            <person name="Chatterji S."/>
            <person name="Dewey C."/>
            <person name="Pachter L."/>
            <person name="Bray N."/>
            <person name="Yap V.B."/>
            <person name="Caspi A."/>
            <person name="Tesler G."/>
            <person name="Pevzner P.A."/>
            <person name="Haussler D."/>
            <person name="Roskin K.M."/>
            <person name="Baertsch R."/>
            <person name="Clawson H."/>
            <person name="Furey T.S."/>
            <person name="Hinrichs A.S."/>
            <person name="Karolchik D."/>
            <person name="Kent W.J."/>
            <person name="Rosenbloom K.R."/>
            <person name="Trumbower H."/>
            <person name="Weirauch M."/>
            <person name="Cooper D.N."/>
            <person name="Stenson P.D."/>
            <person name="Ma B."/>
            <person name="Brent M."/>
            <person name="Arumugam M."/>
            <person name="Shteynberg D."/>
            <person name="Copley R.R."/>
            <person name="Taylor M.S."/>
            <person name="Riethman H."/>
            <person name="Mudunuri U."/>
            <person name="Peterson J."/>
            <person name="Guyer M."/>
            <person name="Felsenfeld A."/>
            <person name="Old S."/>
            <person name="Mockrin S."/>
            <person name="Collins F.S."/>
        </authorList>
    </citation>
    <scope>NUCLEOTIDE SEQUENCE [LARGE SCALE GENOMIC DNA]</scope>
    <source>
        <strain>Brown Norway</strain>
    </source>
</reference>
<reference key="2">
    <citation type="journal article" date="2004" name="Genome Res.">
        <title>The status, quality, and expansion of the NIH full-length cDNA project: the Mammalian Gene Collection (MGC).</title>
        <authorList>
            <consortium name="The MGC Project Team"/>
        </authorList>
    </citation>
    <scope>NUCLEOTIDE SEQUENCE [LARGE SCALE MRNA] (ISOFORM 2)</scope>
    <source>
        <tissue>Testis</tissue>
    </source>
</reference>
<proteinExistence type="evidence at transcript level"/>
<sequence length="651" mass="74677">MASATLGSSSSSASPAVAELCQNTPETFLEASKLLLTYADNILRNPSDEKYRSIRIGNTAFSTRLLPVRGAVECLFEMGFEEGETHLIFPKKASVEQLQKIRDLIAVERRSRLDGSSQKVEFSQHPAAVRLPAEQPEDPTGLMQHSGNQPGQPLSLPSAPLVVGDSTIFKVLQSNIQHVQLYENPVLQEKALACIPVNELKRKSQEKLFRARKLDKGTKVSDEDFLLLELLHWFKEEFFHWVNNVVCSRCGRETRSRDEALPPNDDELKWGAKNVEDHYCDACQLSNRFPRYNNPEKLLETRCGRCGEWANCFTLCCRALGFEARYVWDYTDHVWTEVYSPSQQRWLHCDACEDVCDKPLLYEIGWGKKLSYIIAFSKDEVVDVTWRYSCKHEEVMSRRTKVKEELLRETINGLNKQRQLLLSESRRKELLQRIIVELVEFISPKTPRPGELGGRVSGSLAWRVARGETCLERKEILFIPSENEKISKQFHLRYDIVRDRYIRVSDNNANISGWENGVWKMESIFRKVEKDWNMVYLARKEGSSFAYISWKFECGSAGLKVDNVSIRTSSQSFETGSVRWKLRSEMAQVNLLGDRNLRSYDDFCGATEVTLEAELSRGDGDVAWQHTQLFRQSLNDHAENGLEIIITFSDL</sequence>
<evidence type="ECO:0000250" key="1"/>
<evidence type="ECO:0000250" key="2">
    <source>
        <dbReference type="UniProtKB" id="Q96IV0"/>
    </source>
</evidence>
<evidence type="ECO:0000255" key="3">
    <source>
        <dbReference type="PROSITE-ProRule" id="PRU00731"/>
    </source>
</evidence>
<evidence type="ECO:0000256" key="4">
    <source>
        <dbReference type="SAM" id="MobiDB-lite"/>
    </source>
</evidence>
<evidence type="ECO:0000303" key="5">
    <source>
    </source>
</evidence>
<name>NGLY1_RAT</name>
<gene>
    <name type="primary">Ngly1</name>
</gene>
<feature type="initiator methionine" description="Removed" evidence="2">
    <location>
        <position position="1"/>
    </location>
</feature>
<feature type="chain" id="PRO_0000248974" description="Peptide-N(4)-(N-acetyl-beta-glucosaminyl)asparagine amidase">
    <location>
        <begin position="2"/>
        <end position="651"/>
    </location>
</feature>
<feature type="domain" description="PUB">
    <location>
        <begin position="30"/>
        <end position="91"/>
    </location>
</feature>
<feature type="domain" description="PAW" evidence="3">
    <location>
        <begin position="451"/>
        <end position="651"/>
    </location>
</feature>
<feature type="region of interest" description="Disordered" evidence="4">
    <location>
        <begin position="116"/>
        <end position="153"/>
    </location>
</feature>
<feature type="compositionally biased region" description="Polar residues" evidence="4">
    <location>
        <begin position="143"/>
        <end position="152"/>
    </location>
</feature>
<feature type="active site" description="Nucleophile" evidence="1">
    <location>
        <position position="306"/>
    </location>
</feature>
<feature type="active site" evidence="1">
    <location>
        <position position="333"/>
    </location>
</feature>
<feature type="active site" evidence="1">
    <location>
        <position position="350"/>
    </location>
</feature>
<feature type="binding site" evidence="1">
    <location>
        <position position="247"/>
    </location>
    <ligand>
        <name>Zn(2+)</name>
        <dbReference type="ChEBI" id="CHEBI:29105"/>
    </ligand>
</feature>
<feature type="binding site" evidence="1">
    <location>
        <position position="250"/>
    </location>
    <ligand>
        <name>Zn(2+)</name>
        <dbReference type="ChEBI" id="CHEBI:29105"/>
    </ligand>
</feature>
<feature type="binding site" evidence="1">
    <location>
        <position position="280"/>
    </location>
    <ligand>
        <name>Zn(2+)</name>
        <dbReference type="ChEBI" id="CHEBI:29105"/>
    </ligand>
</feature>
<feature type="binding site" evidence="1">
    <location>
        <position position="283"/>
    </location>
    <ligand>
        <name>Zn(2+)</name>
        <dbReference type="ChEBI" id="CHEBI:29105"/>
    </ligand>
</feature>
<feature type="modified residue" description="N-acetylalanine" evidence="2">
    <location>
        <position position="2"/>
    </location>
</feature>
<feature type="splice variant" id="VSP_020347" description="In isoform 2." evidence="5">
    <original>DRNLRSYDDFCGATEVTLEAELSRGDGDVAWQHTQLFRQSLNDHAENGLEIIITFSDL</original>
    <variation>GRSRQKSAFL</variation>
    <location>
        <begin position="594"/>
        <end position="651"/>
    </location>
</feature>
<dbReference type="EC" id="3.5.1.52"/>
<dbReference type="EMBL" id="AABR03096885">
    <property type="status" value="NOT_ANNOTATED_CDS"/>
    <property type="molecule type" value="Genomic_DNA"/>
</dbReference>
<dbReference type="EMBL" id="AABR03096708">
    <property type="status" value="NOT_ANNOTATED_CDS"/>
    <property type="molecule type" value="Genomic_DNA"/>
</dbReference>
<dbReference type="EMBL" id="AABR03096256">
    <property type="status" value="NOT_ANNOTATED_CDS"/>
    <property type="molecule type" value="Genomic_DNA"/>
</dbReference>
<dbReference type="EMBL" id="BC083837">
    <property type="protein sequence ID" value="AAH83837.1"/>
    <property type="molecule type" value="mRNA"/>
</dbReference>
<dbReference type="RefSeq" id="NP_001014158.1">
    <molecule id="Q5XI55-2"/>
    <property type="nucleotide sequence ID" value="NM_001014136.2"/>
</dbReference>
<dbReference type="RefSeq" id="NP_001401916.1">
    <molecule id="Q5XI55-1"/>
    <property type="nucleotide sequence ID" value="NM_001414987.1"/>
</dbReference>
<dbReference type="SMR" id="Q5XI55"/>
<dbReference type="BioGRID" id="262367">
    <property type="interactions" value="1"/>
</dbReference>
<dbReference type="FunCoup" id="Q5XI55">
    <property type="interactions" value="3676"/>
</dbReference>
<dbReference type="STRING" id="10116.ENSRNOP00000008289"/>
<dbReference type="GlyGen" id="Q5XI55">
    <property type="glycosylation" value="1 site"/>
</dbReference>
<dbReference type="iPTMnet" id="Q5XI55"/>
<dbReference type="PhosphoSitePlus" id="Q5XI55"/>
<dbReference type="PaxDb" id="10116-ENSRNOP00000008289"/>
<dbReference type="Ensembl" id="ENSRNOT00000008289.7">
    <molecule id="Q5XI55-1"/>
    <property type="protein sequence ID" value="ENSRNOP00000008289.6"/>
    <property type="gene ID" value="ENSRNOG00000006143.7"/>
</dbReference>
<dbReference type="GeneID" id="361014"/>
<dbReference type="KEGG" id="rno:361014"/>
<dbReference type="AGR" id="RGD:1308518"/>
<dbReference type="CTD" id="55768"/>
<dbReference type="RGD" id="1308518">
    <property type="gene designation" value="Ngly1"/>
</dbReference>
<dbReference type="eggNOG" id="KOG0909">
    <property type="taxonomic scope" value="Eukaryota"/>
</dbReference>
<dbReference type="GeneTree" id="ENSGT00390000006540"/>
<dbReference type="HOGENOM" id="CLU_030187_1_0_1"/>
<dbReference type="InParanoid" id="Q5XI55"/>
<dbReference type="OMA" id="ENHYCSQ"/>
<dbReference type="OrthoDB" id="409136at2759"/>
<dbReference type="PhylomeDB" id="Q5XI55"/>
<dbReference type="BRENDA" id="3.5.1.52">
    <property type="organism ID" value="5301"/>
</dbReference>
<dbReference type="Reactome" id="R-RNO-532668">
    <property type="pathway name" value="N-glycan trimming in the ER and Calnexin/Calreticulin cycle"/>
</dbReference>
<dbReference type="PRO" id="PR:Q5XI55"/>
<dbReference type="Proteomes" id="UP000002494">
    <property type="component" value="Chromosome 15"/>
</dbReference>
<dbReference type="Bgee" id="ENSRNOG00000006143">
    <property type="expression patterns" value="Expressed in liver and 19 other cell types or tissues"/>
</dbReference>
<dbReference type="GO" id="GO:0005737">
    <property type="term" value="C:cytoplasm"/>
    <property type="evidence" value="ECO:0000250"/>
    <property type="project" value="UniProtKB"/>
</dbReference>
<dbReference type="GO" id="GO:0005829">
    <property type="term" value="C:cytosol"/>
    <property type="evidence" value="ECO:0000318"/>
    <property type="project" value="GO_Central"/>
</dbReference>
<dbReference type="GO" id="GO:0005634">
    <property type="term" value="C:nucleus"/>
    <property type="evidence" value="ECO:0000318"/>
    <property type="project" value="GO_Central"/>
</dbReference>
<dbReference type="GO" id="GO:0046872">
    <property type="term" value="F:metal ion binding"/>
    <property type="evidence" value="ECO:0007669"/>
    <property type="project" value="UniProtKB-KW"/>
</dbReference>
<dbReference type="GO" id="GO:0000224">
    <property type="term" value="F:peptide-N4-(N-acetyl-beta-glucosaminyl)asparagine amidase activity"/>
    <property type="evidence" value="ECO:0000266"/>
    <property type="project" value="RGD"/>
</dbReference>
<dbReference type="GO" id="GO:0006516">
    <property type="term" value="P:glycoprotein catabolic process"/>
    <property type="evidence" value="ECO:0000250"/>
    <property type="project" value="UniProtKB"/>
</dbReference>
<dbReference type="GO" id="GO:0030513">
    <property type="term" value="P:positive regulation of BMP signaling pathway"/>
    <property type="evidence" value="ECO:0000318"/>
    <property type="project" value="GO_Central"/>
</dbReference>
<dbReference type="CDD" id="cd10459">
    <property type="entry name" value="PUB_PNGase"/>
    <property type="match status" value="1"/>
</dbReference>
<dbReference type="FunFam" id="1.20.58.2190:FF:000001">
    <property type="entry name" value="peptide-N(4)-(N-acetyl-beta- glucosaminyl)asparagine amidase"/>
    <property type="match status" value="1"/>
</dbReference>
<dbReference type="FunFam" id="2.20.25.10:FF:000011">
    <property type="entry name" value="peptide-N(4)-(N-acetyl-beta- glucosaminyl)asparagine amidase"/>
    <property type="match status" value="1"/>
</dbReference>
<dbReference type="FunFam" id="3.10.620.30:FF:000001">
    <property type="entry name" value="peptide-N(4)-(N-acetyl-beta- glucosaminyl)asparagine amidase"/>
    <property type="match status" value="1"/>
</dbReference>
<dbReference type="FunFam" id="2.60.120.1020:FF:000001">
    <property type="entry name" value="Peptide-N(4)-(N-acetyl-beta-glucosaminyl)asparagine amidase"/>
    <property type="match status" value="1"/>
</dbReference>
<dbReference type="Gene3D" id="1.20.58.2190">
    <property type="match status" value="1"/>
</dbReference>
<dbReference type="Gene3D" id="2.20.25.10">
    <property type="match status" value="1"/>
</dbReference>
<dbReference type="Gene3D" id="3.10.620.30">
    <property type="match status" value="1"/>
</dbReference>
<dbReference type="Gene3D" id="2.60.120.1020">
    <property type="entry name" value="Peptide N glycanase, PAW domain"/>
    <property type="match status" value="1"/>
</dbReference>
<dbReference type="InterPro" id="IPR008979">
    <property type="entry name" value="Galactose-bd-like_sf"/>
</dbReference>
<dbReference type="InterPro" id="IPR038765">
    <property type="entry name" value="Papain-like_cys_pep_sf"/>
</dbReference>
<dbReference type="InterPro" id="IPR038680">
    <property type="entry name" value="PAW_sf"/>
</dbReference>
<dbReference type="InterPro" id="IPR006588">
    <property type="entry name" value="Peptide_N_glycanase_PAW_dom"/>
</dbReference>
<dbReference type="InterPro" id="IPR050883">
    <property type="entry name" value="PNGase"/>
</dbReference>
<dbReference type="InterPro" id="IPR036339">
    <property type="entry name" value="PUB-like_dom_sf"/>
</dbReference>
<dbReference type="InterPro" id="IPR018997">
    <property type="entry name" value="PUB_domain"/>
</dbReference>
<dbReference type="InterPro" id="IPR002931">
    <property type="entry name" value="Transglutaminase-like"/>
</dbReference>
<dbReference type="PANTHER" id="PTHR12143">
    <property type="entry name" value="PEPTIDE N-GLYCANASE PNGASE -RELATED"/>
    <property type="match status" value="1"/>
</dbReference>
<dbReference type="PANTHER" id="PTHR12143:SF19">
    <property type="entry name" value="PEPTIDE-N(4)-(N-ACETYL-BETA-GLUCOSAMINYL)ASPARAGINE AMIDASE"/>
    <property type="match status" value="1"/>
</dbReference>
<dbReference type="Pfam" id="PF04721">
    <property type="entry name" value="PAW"/>
    <property type="match status" value="1"/>
</dbReference>
<dbReference type="Pfam" id="PF09409">
    <property type="entry name" value="PUB"/>
    <property type="match status" value="1"/>
</dbReference>
<dbReference type="Pfam" id="PF01841">
    <property type="entry name" value="Transglut_core"/>
    <property type="match status" value="1"/>
</dbReference>
<dbReference type="SMART" id="SM00613">
    <property type="entry name" value="PAW"/>
    <property type="match status" value="1"/>
</dbReference>
<dbReference type="SMART" id="SM00580">
    <property type="entry name" value="PUG"/>
    <property type="match status" value="1"/>
</dbReference>
<dbReference type="SMART" id="SM00460">
    <property type="entry name" value="TGc"/>
    <property type="match status" value="1"/>
</dbReference>
<dbReference type="SUPFAM" id="SSF54001">
    <property type="entry name" value="Cysteine proteinases"/>
    <property type="match status" value="1"/>
</dbReference>
<dbReference type="SUPFAM" id="SSF49785">
    <property type="entry name" value="Galactose-binding domain-like"/>
    <property type="match status" value="1"/>
</dbReference>
<dbReference type="SUPFAM" id="SSF143503">
    <property type="entry name" value="PUG domain-like"/>
    <property type="match status" value="1"/>
</dbReference>
<dbReference type="PROSITE" id="PS51398">
    <property type="entry name" value="PAW"/>
    <property type="match status" value="1"/>
</dbReference>
<keyword id="KW-0007">Acetylation</keyword>
<keyword id="KW-0025">Alternative splicing</keyword>
<keyword id="KW-0963">Cytoplasm</keyword>
<keyword id="KW-0378">Hydrolase</keyword>
<keyword id="KW-0479">Metal-binding</keyword>
<keyword id="KW-1185">Reference proteome</keyword>
<keyword id="KW-0862">Zinc</keyword>
<organism>
    <name type="scientific">Rattus norvegicus</name>
    <name type="common">Rat</name>
    <dbReference type="NCBI Taxonomy" id="10116"/>
    <lineage>
        <taxon>Eukaryota</taxon>
        <taxon>Metazoa</taxon>
        <taxon>Chordata</taxon>
        <taxon>Craniata</taxon>
        <taxon>Vertebrata</taxon>
        <taxon>Euteleostomi</taxon>
        <taxon>Mammalia</taxon>
        <taxon>Eutheria</taxon>
        <taxon>Euarchontoglires</taxon>
        <taxon>Glires</taxon>
        <taxon>Rodentia</taxon>
        <taxon>Myomorpha</taxon>
        <taxon>Muroidea</taxon>
        <taxon>Muridae</taxon>
        <taxon>Murinae</taxon>
        <taxon>Rattus</taxon>
    </lineage>
</organism>
<accession>Q5XI55</accession>
<protein>
    <recommendedName>
        <fullName>Peptide-N(4)-(N-acetyl-beta-glucosaminyl)asparagine amidase</fullName>
        <shortName>PNGase</shortName>
        <ecNumber>3.5.1.52</ecNumber>
    </recommendedName>
    <alternativeName>
        <fullName>N-glycanase 1</fullName>
    </alternativeName>
    <alternativeName>
        <fullName>Peptide:N-glycanase</fullName>
    </alternativeName>
</protein>
<comment type="function">
    <text evidence="1">Specifically deglycosylates the denatured form of N-linked glycoproteins in the cytoplasm and assists their proteasome-mediated degradation. Cleaves the beta-aspartyl-glucosamine (GlcNAc) of the glycan and the amide side chain of Asn, converting Asn to Asp. Prefers proteins containing high-mannose over those bearing complex type oligosaccharides. Can recognize misfolded proteins in the endoplasmic reticulum that are exported to the cytosol to be destroyed and deglycosylate them, while it has no activity toward native proteins. Deglycosylation is a prerequisite for subsequent proteasome-mediated degradation of some, but not all, misfolded glycoproteins (By similarity).</text>
</comment>
<comment type="catalytic activity">
    <reaction>
        <text>Hydrolysis of an N(4)-(acetyl-beta-D-glucosaminyl)asparagine residue in which the glucosamine residue may be further glycosylated, to yield a (substituted) N-acetyl-beta-D-glucosaminylamine and a peptide containing an aspartate residue.</text>
        <dbReference type="EC" id="3.5.1.52"/>
    </reaction>
</comment>
<comment type="cofactor">
    <cofactor evidence="1">
        <name>Zn(2+)</name>
        <dbReference type="ChEBI" id="CHEBI:29105"/>
    </cofactor>
    <text evidence="1">Binds 1 zinc ion per subunit.</text>
</comment>
<comment type="activity regulation">
    <text evidence="1">Inhibited by Z-VAD-fmk, a well-known caspase inhibitor, which inhibits enzyme activity through covalent binding of the carbohydrate to the single Cys-306 residue.</text>
</comment>
<comment type="subunit">
    <text evidence="1">Component of a complex required to couple retrotranslocation, ubiquitination and deglycosylation composed of NGLY1, SAKS1, AMFR, VCP and RAD23B. Interacts with the proteasome components RAD23B and PSMC1. Interacts with directly with VCP. Interacts with DERL1, bringing it close to the endoplasmic reticulum membrane. Interacts with SAKS1 (By similarity).</text>
</comment>
<comment type="subcellular location">
    <subcellularLocation>
        <location evidence="1">Cytoplasm</location>
    </subcellularLocation>
</comment>
<comment type="alternative products">
    <event type="alternative splicing"/>
    <isoform>
        <id>Q5XI55-1</id>
        <name>1</name>
        <sequence type="displayed"/>
    </isoform>
    <isoform>
        <id>Q5XI55-2</id>
        <name>2</name>
        <sequence type="described" ref="VSP_020347"/>
    </isoform>
</comment>
<comment type="domain">
    <text evidence="1">The PUB domain mediates the interaction with VCP.</text>
</comment>
<comment type="similarity">
    <text evidence="3">Belongs to the transglutaminase-like superfamily. PNGase family.</text>
</comment>